<comment type="function">
    <text evidence="1">Forms an icosahedral capsid with a T=7 symmetry and a 50 nm diameter. The capsid is composed of 72 pentamers linked to each other by disulfide bonds and associated with L2 proteins. Binds to heparan sulfate proteoglycans on cell surface of basal layer keratinocytes to provide initial virion attachment. This binding mediates a conformational change in the virus capsid that facilitates efficient infection. The virion enters the host cell via endocytosis. During virus trafficking, L1 protein dissociates from the viral DNA and the genomic DNA is released to the host nucleus. The virion assembly takes place within the cell nucleus. Encapsulates the genomic DNA together with protein L2.</text>
</comment>
<comment type="subunit">
    <text evidence="1">Self-assembles into homopentamers. The capsid has an icosahedral symmetry and consists of 72 capsomers, with each capsomer being a pentamer of L1. Interacts with the minor capsid protein L2; this interaction is necessary for viral genome encapsidation. Interacts with protein E2; this interaction enhances E2-dependent replication and transcription activation.</text>
</comment>
<comment type="subcellular location">
    <subcellularLocation>
        <location evidence="1">Virion</location>
    </subcellularLocation>
    <subcellularLocation>
        <location evidence="1">Host nucleus</location>
    </subcellularLocation>
</comment>
<comment type="similarity">
    <text evidence="1">Belongs to the papillomaviridae L1 protein family.</text>
</comment>
<keyword id="KW-0167">Capsid protein</keyword>
<keyword id="KW-1015">Disulfide bond</keyword>
<keyword id="KW-1048">Host nucleus</keyword>
<keyword id="KW-0945">Host-virus interaction</keyword>
<keyword id="KW-0426">Late protein</keyword>
<keyword id="KW-1185">Reference proteome</keyword>
<keyword id="KW-1145">T=7 icosahedral capsid protein</keyword>
<keyword id="KW-1161">Viral attachment to host cell</keyword>
<keyword id="KW-1162">Viral penetration into host cytoplasm</keyword>
<keyword id="KW-0946">Virion</keyword>
<keyword id="KW-1164">Virus endocytosis by host</keyword>
<keyword id="KW-1160">Virus entry into host cell</keyword>
<organism>
    <name type="scientific">Human papillomavirus type 1</name>
    <name type="common">Human papillomavirus type 1a</name>
    <dbReference type="NCBI Taxonomy" id="10583"/>
    <lineage>
        <taxon>Viruses</taxon>
        <taxon>Monodnaviria</taxon>
        <taxon>Shotokuvirae</taxon>
        <taxon>Cossaviricota</taxon>
        <taxon>Papovaviricetes</taxon>
        <taxon>Zurhausenvirales</taxon>
        <taxon>Papillomaviridae</taxon>
        <taxon>Firstpapillomavirinae</taxon>
        <taxon>Mupapillomavirus</taxon>
        <taxon>Mupapillomavirus 1</taxon>
    </lineage>
</organism>
<dbReference type="EMBL" id="V01116">
    <property type="protein sequence ID" value="CAA24318.1"/>
    <property type="molecule type" value="Genomic_DNA"/>
</dbReference>
<dbReference type="PIR" id="A03637">
    <property type="entry name" value="P1WL"/>
</dbReference>
<dbReference type="RefSeq" id="NP_040309.1">
    <property type="nucleotide sequence ID" value="NC_001356.1"/>
</dbReference>
<dbReference type="SMR" id="P03099"/>
<dbReference type="GeneID" id="1489173"/>
<dbReference type="KEGG" id="vg:1489173"/>
<dbReference type="Proteomes" id="UP000006372">
    <property type="component" value="Segment"/>
</dbReference>
<dbReference type="GO" id="GO:0042025">
    <property type="term" value="C:host cell nucleus"/>
    <property type="evidence" value="ECO:0007669"/>
    <property type="project" value="UniProtKB-SubCell"/>
</dbReference>
<dbReference type="GO" id="GO:0039620">
    <property type="term" value="C:T=7 icosahedral viral capsid"/>
    <property type="evidence" value="ECO:0007669"/>
    <property type="project" value="UniProtKB-UniRule"/>
</dbReference>
<dbReference type="GO" id="GO:0005198">
    <property type="term" value="F:structural molecule activity"/>
    <property type="evidence" value="ECO:0007669"/>
    <property type="project" value="UniProtKB-UniRule"/>
</dbReference>
<dbReference type="GO" id="GO:0075509">
    <property type="term" value="P:endocytosis involved in viral entry into host cell"/>
    <property type="evidence" value="ECO:0007669"/>
    <property type="project" value="UniProtKB-KW"/>
</dbReference>
<dbReference type="GO" id="GO:0019062">
    <property type="term" value="P:virion attachment to host cell"/>
    <property type="evidence" value="ECO:0007669"/>
    <property type="project" value="UniProtKB-UniRule"/>
</dbReference>
<dbReference type="Gene3D" id="2.60.175.20">
    <property type="entry name" value="Major capsid L1 (late) superfamily, Papillomavirus"/>
    <property type="match status" value="2"/>
</dbReference>
<dbReference type="HAMAP" id="MF_04002">
    <property type="entry name" value="PPV_L1"/>
    <property type="match status" value="1"/>
</dbReference>
<dbReference type="InterPro" id="IPR002210">
    <property type="entry name" value="Capsid_L1_Papillomavir"/>
</dbReference>
<dbReference type="InterPro" id="IPR036973">
    <property type="entry name" value="Capsid_L1_sf_Papillomavir"/>
</dbReference>
<dbReference type="InterPro" id="IPR011222">
    <property type="entry name" value="dsDNA_vir_gr_I_capsid"/>
</dbReference>
<dbReference type="Pfam" id="PF00500">
    <property type="entry name" value="Late_protein_L1"/>
    <property type="match status" value="1"/>
</dbReference>
<dbReference type="PRINTS" id="PR00865">
    <property type="entry name" value="HPVCAPSIDL1"/>
</dbReference>
<dbReference type="SUPFAM" id="SSF88648">
    <property type="entry name" value="Group I dsDNA viruses"/>
    <property type="match status" value="1"/>
</dbReference>
<feature type="chain" id="PRO_0000133483" description="Major capsid protein L1">
    <location>
        <begin position="1"/>
        <end position="508"/>
    </location>
</feature>
<feature type="region of interest" description="Disordered" evidence="2">
    <location>
        <begin position="480"/>
        <end position="508"/>
    </location>
</feature>
<feature type="compositionally biased region" description="Basic residues" evidence="2">
    <location>
        <begin position="491"/>
        <end position="508"/>
    </location>
</feature>
<feature type="disulfide bond" description="Interchain (with C-435)" evidence="1">
    <location>
        <position position="179"/>
    </location>
</feature>
<feature type="disulfide bond" description="Interchain (with C-179)" evidence="1">
    <location>
        <position position="435"/>
    </location>
</feature>
<accession>P03099</accession>
<gene>
    <name evidence="1" type="primary">L1</name>
</gene>
<evidence type="ECO:0000255" key="1">
    <source>
        <dbReference type="HAMAP-Rule" id="MF_04002"/>
    </source>
</evidence>
<evidence type="ECO:0000256" key="2">
    <source>
        <dbReference type="SAM" id="MobiDB-lite"/>
    </source>
</evidence>
<proteinExistence type="inferred from homology"/>
<name>VL1_HPV1</name>
<protein>
    <recommendedName>
        <fullName evidence="1">Major capsid protein L1</fullName>
    </recommendedName>
</protein>
<reference key="1">
    <citation type="journal article" date="1982" name="EMBO J.">
        <title>Human papillomavirus 1a complete DNA sequence: a novel type of genome organization among papovaviridae.</title>
        <authorList>
            <person name="Danos O."/>
            <person name="Katinka M."/>
            <person name="Yaniv M."/>
        </authorList>
    </citation>
    <scope>NUCLEOTIDE SEQUENCE [GENOMIC DNA]</scope>
</reference>
<reference key="2">
    <citation type="submission" date="1985-01" db="EMBL/GenBank/DDBJ databases">
        <authorList>
            <person name="Danos O."/>
        </authorList>
    </citation>
    <scope>SEQUENCE REVISION</scope>
</reference>
<organismHost>
    <name type="scientific">Homo sapiens</name>
    <name type="common">Human</name>
    <dbReference type="NCBI Taxonomy" id="9606"/>
</organismHost>
<sequence>MYNVFQMAVWLPAQNKFYLPPQPITRILSTDEYVTRTNLFYHATSERLLLVGHPLFEISSNQTVTIPKVSPNAFRVFRVRFADPNRFAFGDKAIFNPETERLVWGLRGIEIGRGQPLGIGITGHPLLNKLDDAENPTNYINTHANGDSRQNTAFDAKQTQMFLVGCTPASGEHWTSSRCPGEQVKLGDCPRVQMIESVIEDGDMMDIGFGAMDFAALQQDKSDVPLDVVQATCKYPDYIRMNHEAYGNSMFFFARREQMYTRHFFTRGGSVGDKEAVPQSLYLTADAEPRTTLATTNYVGTPSGSMVSSDVQLFNRSYWLQRCQGQNNGICWRNQLFITVGDNTRGTSLSISMKNNASTTYSNANFNDFLRHTEEFDLSFIVQLCKVKLTPENLAYIHTMDPNILEDWQLSVSQPPTNPLEDQYRFLGSSLAAKCPEQAPPEPQTDPYSQYKFWEVDLTERMSEQLDQFPLGRKFLYQSGMTQRTATSSTTKRKTVRVSTSAKRRRKA</sequence>